<accession>Q9ZER9</accession>
<keyword id="KW-0028">Amino-acid biosynthesis</keyword>
<keyword id="KW-0057">Aromatic amino acid biosynthesis</keyword>
<keyword id="KW-0456">Lyase</keyword>
<keyword id="KW-0460">Magnesium</keyword>
<keyword id="KW-0479">Metal-binding</keyword>
<keyword id="KW-0614">Plasmid</keyword>
<keyword id="KW-0822">Tryptophan biosynthesis</keyword>
<dbReference type="EC" id="4.1.3.27"/>
<dbReference type="EMBL" id="AJ012334">
    <property type="protein sequence ID" value="CAA09996.1"/>
    <property type="molecule type" value="Genomic_DNA"/>
</dbReference>
<dbReference type="SMR" id="Q9ZER9"/>
<dbReference type="UniPathway" id="UPA00035">
    <property type="reaction ID" value="UER00040"/>
</dbReference>
<dbReference type="GO" id="GO:0004049">
    <property type="term" value="F:anthranilate synthase activity"/>
    <property type="evidence" value="ECO:0007669"/>
    <property type="project" value="UniProtKB-EC"/>
</dbReference>
<dbReference type="GO" id="GO:0046872">
    <property type="term" value="F:metal ion binding"/>
    <property type="evidence" value="ECO:0007669"/>
    <property type="project" value="UniProtKB-KW"/>
</dbReference>
<dbReference type="GO" id="GO:0000162">
    <property type="term" value="P:L-tryptophan biosynthetic process"/>
    <property type="evidence" value="ECO:0007669"/>
    <property type="project" value="UniProtKB-UniPathway"/>
</dbReference>
<dbReference type="Gene3D" id="3.60.120.10">
    <property type="entry name" value="Anthranilate synthase"/>
    <property type="match status" value="1"/>
</dbReference>
<dbReference type="InterPro" id="IPR005801">
    <property type="entry name" value="ADC_synthase"/>
</dbReference>
<dbReference type="InterPro" id="IPR019999">
    <property type="entry name" value="Anth_synth_I-like"/>
</dbReference>
<dbReference type="InterPro" id="IPR006805">
    <property type="entry name" value="Anth_synth_I_N"/>
</dbReference>
<dbReference type="InterPro" id="IPR005257">
    <property type="entry name" value="Anth_synth_I_TrpE"/>
</dbReference>
<dbReference type="InterPro" id="IPR015890">
    <property type="entry name" value="Chorismate_C"/>
</dbReference>
<dbReference type="NCBIfam" id="NF010079">
    <property type="entry name" value="PRK13564.1"/>
    <property type="match status" value="1"/>
</dbReference>
<dbReference type="NCBIfam" id="TIGR00565">
    <property type="entry name" value="trpE_proteo"/>
    <property type="match status" value="1"/>
</dbReference>
<dbReference type="PANTHER" id="PTHR11236">
    <property type="entry name" value="AMINOBENZOATE/ANTHRANILATE SYNTHASE"/>
    <property type="match status" value="1"/>
</dbReference>
<dbReference type="PANTHER" id="PTHR11236:SF49">
    <property type="entry name" value="ANTHRANILATE SYNTHASE COMPONENT 1"/>
    <property type="match status" value="1"/>
</dbReference>
<dbReference type="Pfam" id="PF04715">
    <property type="entry name" value="Anth_synt_I_N"/>
    <property type="match status" value="1"/>
</dbReference>
<dbReference type="Pfam" id="PF00425">
    <property type="entry name" value="Chorismate_bind"/>
    <property type="match status" value="1"/>
</dbReference>
<dbReference type="PIRSF" id="PIRSF001373">
    <property type="entry name" value="TrpE"/>
    <property type="match status" value="1"/>
</dbReference>
<dbReference type="PRINTS" id="PR00095">
    <property type="entry name" value="ANTSNTHASEI"/>
</dbReference>
<dbReference type="SUPFAM" id="SSF56322">
    <property type="entry name" value="ADC synthase"/>
    <property type="match status" value="1"/>
</dbReference>
<sequence>MKNRRYEVEILQIEGIYQSDPTTIFNQLCNKKKCTLLLESAEIDKKHALESMIIIDSALRISSLDNIVTIEALTENGKSLLFKLDLLLPLTVKNVLFENSRRLIFPFINHEIDEDKKLRSVSIFDTFRLLIKTMKIPKNLTKSMFFGGLFSYDLVNNFEKLPILNRNQKCPDLCFYLAETLLILDHKKKNCIIQSSLFNRKSSEKNRLKKNLQEIKTKLTQNVPKIEHRKIDQISLKCNLTDKEYIKIIKKMKQSIKKGDIFQVVPSRKFYLPCISSLSAYQRLKQSNPSPYMFFMQDSDFTLFGASPESSLKYDSKSKKIEIYPIAGTRPRGKTENGLIDLDLDSKIELEMRMNEKELSEHLMLVDLARNDLARICEPGSRYVASLTKVDRYSCVMHLVSKIVGRLKSNLDIFHAYCACMNMGTLTGAPKIKAMELISKFEKERRGSYGGSIGYFTESNNFDTCIIIRSAYVENNLATVQAGAGIVLDSVPQEEANESRNKAQAVIQAIIYAHSSREVV</sequence>
<name>TRPE_BUCPS</name>
<geneLocation type="plasmid">
    <name>pBPs2</name>
</geneLocation>
<protein>
    <recommendedName>
        <fullName>Anthranilate synthase component 1</fullName>
        <shortName>AS</shortName>
        <shortName>ASI</shortName>
        <ecNumber>4.1.3.27</ecNumber>
    </recommendedName>
</protein>
<proteinExistence type="inferred from homology"/>
<reference key="1">
    <citation type="journal article" date="1999" name="Appl. Environ. Microbiol.">
        <title>Plasmid-encoded anthranilate synthase (TrpEG) in Buchnera aphidicola from aphids of the family pemphigidae.</title>
        <authorList>
            <person name="van Ham R.C.H.J."/>
            <person name="Martinez-Torres D."/>
            <person name="Moya A."/>
            <person name="Latorre A."/>
        </authorList>
    </citation>
    <scope>NUCLEOTIDE SEQUENCE [GENOMIC DNA]</scope>
</reference>
<feature type="chain" id="PRO_0000154084" description="Anthranilate synthase component 1">
    <location>
        <begin position="1"/>
        <end position="520"/>
    </location>
</feature>
<feature type="binding site" evidence="2">
    <location>
        <position position="40"/>
    </location>
    <ligand>
        <name>L-tryptophan</name>
        <dbReference type="ChEBI" id="CHEBI:57912"/>
    </ligand>
</feature>
<feature type="binding site" evidence="2">
    <location>
        <begin position="291"/>
        <end position="293"/>
    </location>
    <ligand>
        <name>L-tryptophan</name>
        <dbReference type="ChEBI" id="CHEBI:57912"/>
    </ligand>
</feature>
<feature type="binding site" evidence="2">
    <location>
        <begin position="328"/>
        <end position="329"/>
    </location>
    <ligand>
        <name>chorismate</name>
        <dbReference type="ChEBI" id="CHEBI:29748"/>
    </ligand>
</feature>
<feature type="binding site" evidence="2">
    <location>
        <position position="361"/>
    </location>
    <ligand>
        <name>Mg(2+)</name>
        <dbReference type="ChEBI" id="CHEBI:18420"/>
    </ligand>
</feature>
<feature type="binding site" evidence="2">
    <location>
        <position position="449"/>
    </location>
    <ligand>
        <name>chorismate</name>
        <dbReference type="ChEBI" id="CHEBI:29748"/>
    </ligand>
</feature>
<feature type="binding site" evidence="2">
    <location>
        <position position="469"/>
    </location>
    <ligand>
        <name>chorismate</name>
        <dbReference type="ChEBI" id="CHEBI:29748"/>
    </ligand>
</feature>
<feature type="binding site" evidence="2">
    <location>
        <begin position="483"/>
        <end position="485"/>
    </location>
    <ligand>
        <name>chorismate</name>
        <dbReference type="ChEBI" id="CHEBI:29748"/>
    </ligand>
</feature>
<feature type="binding site" evidence="2">
    <location>
        <position position="485"/>
    </location>
    <ligand>
        <name>chorismate</name>
        <dbReference type="ChEBI" id="CHEBI:29748"/>
    </ligand>
</feature>
<feature type="binding site" evidence="2">
    <location>
        <position position="498"/>
    </location>
    <ligand>
        <name>Mg(2+)</name>
        <dbReference type="ChEBI" id="CHEBI:18420"/>
    </ligand>
</feature>
<organism>
    <name type="scientific">Buchnera aphidicola subsp. Pemphigus spyrothecae</name>
    <dbReference type="NCBI Taxonomy" id="98799"/>
    <lineage>
        <taxon>Bacteria</taxon>
        <taxon>Pseudomonadati</taxon>
        <taxon>Pseudomonadota</taxon>
        <taxon>Gammaproteobacteria</taxon>
        <taxon>Enterobacterales</taxon>
        <taxon>Erwiniaceae</taxon>
        <taxon>Buchnera</taxon>
    </lineage>
</organism>
<evidence type="ECO:0000250" key="1"/>
<evidence type="ECO:0000250" key="2">
    <source>
        <dbReference type="UniProtKB" id="P00897"/>
    </source>
</evidence>
<evidence type="ECO:0000305" key="3"/>
<comment type="function">
    <text evidence="1">Part of a heterotetrameric complex that catalyzes the two-step biosynthesis of anthranilate, an intermediate in the biosynthesis of L-tryptophan. In the first step, the glutamine-binding beta subunit (TrpG) of anthranilate synthase (AS) provides the glutamine amidotransferase activity which generates ammonia as a substrate that, along with chorismate, is used in the second step, catalyzed by the large alpha subunit of AS (TrpE) to produce anthranilate. In the absence of TrpG, TrpE can synthesize anthranilate directly from chorismate and high concentrations of ammonia (By similarity).</text>
</comment>
<comment type="catalytic activity">
    <reaction>
        <text>chorismate + L-glutamine = anthranilate + pyruvate + L-glutamate + H(+)</text>
        <dbReference type="Rhea" id="RHEA:21732"/>
        <dbReference type="ChEBI" id="CHEBI:15361"/>
        <dbReference type="ChEBI" id="CHEBI:15378"/>
        <dbReference type="ChEBI" id="CHEBI:16567"/>
        <dbReference type="ChEBI" id="CHEBI:29748"/>
        <dbReference type="ChEBI" id="CHEBI:29985"/>
        <dbReference type="ChEBI" id="CHEBI:58359"/>
        <dbReference type="EC" id="4.1.3.27"/>
    </reaction>
</comment>
<comment type="cofactor">
    <cofactor evidence="2">
        <name>Mg(2+)</name>
        <dbReference type="ChEBI" id="CHEBI:18420"/>
    </cofactor>
    <text evidence="2">Binds 1 Mg(2+) ion per subunit.</text>
</comment>
<comment type="activity regulation">
    <text evidence="1">Feedback inhibited by tryptophan.</text>
</comment>
<comment type="pathway">
    <text>Amino-acid biosynthesis; L-tryptophan biosynthesis; L-tryptophan from chorismate: step 1/5.</text>
</comment>
<comment type="subunit">
    <text evidence="1">Heterotetramer consisting of two non-identical subunits: a beta subunit (TrpG) and a large alpha subunit (TrpE).</text>
</comment>
<comment type="similarity">
    <text evidence="3">Belongs to the anthranilate synthase component I family.</text>
</comment>
<gene>
    <name type="primary">trpE</name>
</gene>